<feature type="chain" id="PRO_1000190030" description="Methionyl-tRNA formyltransferase">
    <location>
        <begin position="1"/>
        <end position="310"/>
    </location>
</feature>
<feature type="binding site" evidence="1">
    <location>
        <begin position="109"/>
        <end position="112"/>
    </location>
    <ligand>
        <name>(6S)-5,6,7,8-tetrahydrofolate</name>
        <dbReference type="ChEBI" id="CHEBI:57453"/>
    </ligand>
</feature>
<accession>B9EB94</accession>
<comment type="function">
    <text evidence="1">Attaches a formyl group to the free amino group of methionyl-tRNA(fMet). The formyl group appears to play a dual role in the initiator identity of N-formylmethionyl-tRNA by promoting its recognition by IF2 and preventing the misappropriation of this tRNA by the elongation apparatus.</text>
</comment>
<comment type="catalytic activity">
    <reaction evidence="1">
        <text>L-methionyl-tRNA(fMet) + (6R)-10-formyltetrahydrofolate = N-formyl-L-methionyl-tRNA(fMet) + (6S)-5,6,7,8-tetrahydrofolate + H(+)</text>
        <dbReference type="Rhea" id="RHEA:24380"/>
        <dbReference type="Rhea" id="RHEA-COMP:9952"/>
        <dbReference type="Rhea" id="RHEA-COMP:9953"/>
        <dbReference type="ChEBI" id="CHEBI:15378"/>
        <dbReference type="ChEBI" id="CHEBI:57453"/>
        <dbReference type="ChEBI" id="CHEBI:78530"/>
        <dbReference type="ChEBI" id="CHEBI:78844"/>
        <dbReference type="ChEBI" id="CHEBI:195366"/>
        <dbReference type="EC" id="2.1.2.9"/>
    </reaction>
</comment>
<comment type="similarity">
    <text evidence="1">Belongs to the Fmt family.</text>
</comment>
<reference key="1">
    <citation type="journal article" date="2009" name="J. Bacteriol.">
        <title>Complete genome sequence of Macrococcus caseolyticus strain JCSCS5402, reflecting the ancestral genome of the human-pathogenic staphylococci.</title>
        <authorList>
            <person name="Baba T."/>
            <person name="Kuwahara-Arai K."/>
            <person name="Uchiyama I."/>
            <person name="Takeuchi F."/>
            <person name="Ito T."/>
            <person name="Hiramatsu K."/>
        </authorList>
    </citation>
    <scope>NUCLEOTIDE SEQUENCE [LARGE SCALE GENOMIC DNA]</scope>
    <source>
        <strain>JCSC5402</strain>
    </source>
</reference>
<gene>
    <name evidence="1" type="primary">fmt</name>
    <name type="ordered locus">MCCL_0798</name>
</gene>
<protein>
    <recommendedName>
        <fullName evidence="1">Methionyl-tRNA formyltransferase</fullName>
        <ecNumber evidence="1">2.1.2.9</ecNumber>
    </recommendedName>
</protein>
<organism>
    <name type="scientific">Macrococcus caseolyticus (strain JCSC5402)</name>
    <name type="common">Macrococcoides caseolyticum</name>
    <dbReference type="NCBI Taxonomy" id="458233"/>
    <lineage>
        <taxon>Bacteria</taxon>
        <taxon>Bacillati</taxon>
        <taxon>Bacillota</taxon>
        <taxon>Bacilli</taxon>
        <taxon>Bacillales</taxon>
        <taxon>Staphylococcaceae</taxon>
        <taxon>Macrococcoides</taxon>
    </lineage>
</organism>
<name>FMT_MACCJ</name>
<evidence type="ECO:0000255" key="1">
    <source>
        <dbReference type="HAMAP-Rule" id="MF_00182"/>
    </source>
</evidence>
<sequence length="310" mass="33362">MSKIIFMGTPDFSAPILKALHEAHGVSLVITQPDKPVGRKRVLTPPPVKVMAESLGIEVYQPESMKSDEAFERVHALSPDLIVTAAFGQILPERVLDIPRLGCINVHASLLPKYRGGAPIHKAIINGEKYSGVTIMYMVKRLDAGDMIDSVQVPIEINDTVGTLHDKLSVAGTDLLLEVMPSVLSGTNNRTPQNDSEATFASNVSREEEYVTFDRTALEVHNHIRGLSPWPVAFANFDGKAMKLWASEIAEGSGAPGEIIQADKAGLVIATNDGAVRITSLQPAGKKRMDAASFVAGAKSQLVGMKFNEA</sequence>
<dbReference type="EC" id="2.1.2.9" evidence="1"/>
<dbReference type="EMBL" id="AP009484">
    <property type="protein sequence ID" value="BAH17505.1"/>
    <property type="molecule type" value="Genomic_DNA"/>
</dbReference>
<dbReference type="RefSeq" id="WP_012656705.1">
    <property type="nucleotide sequence ID" value="NC_011999.1"/>
</dbReference>
<dbReference type="SMR" id="B9EB94"/>
<dbReference type="STRING" id="458233.MCCL_0798"/>
<dbReference type="KEGG" id="mcl:MCCL_0798"/>
<dbReference type="eggNOG" id="COG0223">
    <property type="taxonomic scope" value="Bacteria"/>
</dbReference>
<dbReference type="HOGENOM" id="CLU_033347_1_1_9"/>
<dbReference type="OrthoDB" id="9802815at2"/>
<dbReference type="Proteomes" id="UP000001383">
    <property type="component" value="Chromosome"/>
</dbReference>
<dbReference type="GO" id="GO:0005829">
    <property type="term" value="C:cytosol"/>
    <property type="evidence" value="ECO:0007669"/>
    <property type="project" value="TreeGrafter"/>
</dbReference>
<dbReference type="GO" id="GO:0004479">
    <property type="term" value="F:methionyl-tRNA formyltransferase activity"/>
    <property type="evidence" value="ECO:0007669"/>
    <property type="project" value="UniProtKB-UniRule"/>
</dbReference>
<dbReference type="CDD" id="cd08646">
    <property type="entry name" value="FMT_core_Met-tRNA-FMT_N"/>
    <property type="match status" value="1"/>
</dbReference>
<dbReference type="CDD" id="cd08704">
    <property type="entry name" value="Met_tRNA_FMT_C"/>
    <property type="match status" value="1"/>
</dbReference>
<dbReference type="FunFam" id="3.40.50.12230:FF:000001">
    <property type="entry name" value="Methionyl-tRNA formyltransferase"/>
    <property type="match status" value="1"/>
</dbReference>
<dbReference type="FunFam" id="3.40.50.170:FF:000004">
    <property type="entry name" value="Methionyl-tRNA formyltransferase"/>
    <property type="match status" value="1"/>
</dbReference>
<dbReference type="Gene3D" id="3.10.25.10">
    <property type="entry name" value="Formyl transferase, C-terminal domain"/>
    <property type="match status" value="1"/>
</dbReference>
<dbReference type="Gene3D" id="3.40.50.170">
    <property type="entry name" value="Formyl transferase, N-terminal domain"/>
    <property type="match status" value="1"/>
</dbReference>
<dbReference type="HAMAP" id="MF_00182">
    <property type="entry name" value="Formyl_trans"/>
    <property type="match status" value="1"/>
</dbReference>
<dbReference type="InterPro" id="IPR005794">
    <property type="entry name" value="Fmt"/>
</dbReference>
<dbReference type="InterPro" id="IPR005793">
    <property type="entry name" value="Formyl_trans_C"/>
</dbReference>
<dbReference type="InterPro" id="IPR037022">
    <property type="entry name" value="Formyl_trans_C_sf"/>
</dbReference>
<dbReference type="InterPro" id="IPR002376">
    <property type="entry name" value="Formyl_transf_N"/>
</dbReference>
<dbReference type="InterPro" id="IPR036477">
    <property type="entry name" value="Formyl_transf_N_sf"/>
</dbReference>
<dbReference type="InterPro" id="IPR011034">
    <property type="entry name" value="Formyl_transferase-like_C_sf"/>
</dbReference>
<dbReference type="InterPro" id="IPR001555">
    <property type="entry name" value="GART_AS"/>
</dbReference>
<dbReference type="InterPro" id="IPR044135">
    <property type="entry name" value="Met-tRNA-FMT_C"/>
</dbReference>
<dbReference type="InterPro" id="IPR041711">
    <property type="entry name" value="Met-tRNA-FMT_N"/>
</dbReference>
<dbReference type="NCBIfam" id="TIGR00460">
    <property type="entry name" value="fmt"/>
    <property type="match status" value="1"/>
</dbReference>
<dbReference type="PANTHER" id="PTHR11138">
    <property type="entry name" value="METHIONYL-TRNA FORMYLTRANSFERASE"/>
    <property type="match status" value="1"/>
</dbReference>
<dbReference type="PANTHER" id="PTHR11138:SF5">
    <property type="entry name" value="METHIONYL-TRNA FORMYLTRANSFERASE, MITOCHONDRIAL"/>
    <property type="match status" value="1"/>
</dbReference>
<dbReference type="Pfam" id="PF02911">
    <property type="entry name" value="Formyl_trans_C"/>
    <property type="match status" value="1"/>
</dbReference>
<dbReference type="Pfam" id="PF00551">
    <property type="entry name" value="Formyl_trans_N"/>
    <property type="match status" value="1"/>
</dbReference>
<dbReference type="SUPFAM" id="SSF50486">
    <property type="entry name" value="FMT C-terminal domain-like"/>
    <property type="match status" value="1"/>
</dbReference>
<dbReference type="SUPFAM" id="SSF53328">
    <property type="entry name" value="Formyltransferase"/>
    <property type="match status" value="1"/>
</dbReference>
<dbReference type="PROSITE" id="PS00373">
    <property type="entry name" value="GART"/>
    <property type="match status" value="1"/>
</dbReference>
<keyword id="KW-0648">Protein biosynthesis</keyword>
<keyword id="KW-1185">Reference proteome</keyword>
<keyword id="KW-0808">Transferase</keyword>
<proteinExistence type="inferred from homology"/>